<evidence type="ECO:0000305" key="1"/>
<sequence>MKKYIVSIGVDISDNDVKTNPKVNELVNKEIKKRLSKLGIKATISNITGDDIVITSFVPENLIEKNNKIIFEVLNKYAEGFDDLRGISEDKDKAGEGLSYAIAESISEYGDAIIIAFDTYGGESFVDEMALFVKEIGEKFGYDVGCSVSNEPIEIPGIGYTGAESDDPVVVITVEELDDIPKLAGLIYGGLLSFDKLYFVKNGDEVNILPPGVIYTMTAFLNGNVIDLYGGIRRKIKF</sequence>
<feature type="chain" id="PRO_0000107473" description="Uncharacterized protein MJ1676">
    <location>
        <begin position="1"/>
        <end position="238"/>
    </location>
</feature>
<comment type="similarity">
    <text evidence="1">To M.thermoautotrophicum MTH564.</text>
</comment>
<proteinExistence type="predicted"/>
<gene>
    <name type="ordered locus">MJ1676</name>
</gene>
<reference key="1">
    <citation type="journal article" date="1996" name="Science">
        <title>Complete genome sequence of the methanogenic archaeon, Methanococcus jannaschii.</title>
        <authorList>
            <person name="Bult C.J."/>
            <person name="White O."/>
            <person name="Olsen G.J."/>
            <person name="Zhou L."/>
            <person name="Fleischmann R.D."/>
            <person name="Sutton G.G."/>
            <person name="Blake J.A."/>
            <person name="FitzGerald L.M."/>
            <person name="Clayton R.A."/>
            <person name="Gocayne J.D."/>
            <person name="Kerlavage A.R."/>
            <person name="Dougherty B.A."/>
            <person name="Tomb J.-F."/>
            <person name="Adams M.D."/>
            <person name="Reich C.I."/>
            <person name="Overbeek R."/>
            <person name="Kirkness E.F."/>
            <person name="Weinstock K.G."/>
            <person name="Merrick J.M."/>
            <person name="Glodek A."/>
            <person name="Scott J.L."/>
            <person name="Geoghagen N.S.M."/>
            <person name="Weidman J.F."/>
            <person name="Fuhrmann J.L."/>
            <person name="Nguyen D."/>
            <person name="Utterback T.R."/>
            <person name="Kelley J.M."/>
            <person name="Peterson J.D."/>
            <person name="Sadow P.W."/>
            <person name="Hanna M.C."/>
            <person name="Cotton M.D."/>
            <person name="Roberts K.M."/>
            <person name="Hurst M.A."/>
            <person name="Kaine B.P."/>
            <person name="Borodovsky M."/>
            <person name="Klenk H.-P."/>
            <person name="Fraser C.M."/>
            <person name="Smith H.O."/>
            <person name="Woese C.R."/>
            <person name="Venter J.C."/>
        </authorList>
    </citation>
    <scope>NUCLEOTIDE SEQUENCE [LARGE SCALE GENOMIC DNA]</scope>
    <source>
        <strain>ATCC 43067 / DSM 2661 / JAL-1 / JCM 10045 / NBRC 100440</strain>
    </source>
</reference>
<keyword id="KW-1185">Reference proteome</keyword>
<name>Y1676_METJA</name>
<organism>
    <name type="scientific">Methanocaldococcus jannaschii (strain ATCC 43067 / DSM 2661 / JAL-1 / JCM 10045 / NBRC 100440)</name>
    <name type="common">Methanococcus jannaschii</name>
    <dbReference type="NCBI Taxonomy" id="243232"/>
    <lineage>
        <taxon>Archaea</taxon>
        <taxon>Methanobacteriati</taxon>
        <taxon>Methanobacteriota</taxon>
        <taxon>Methanomada group</taxon>
        <taxon>Methanococci</taxon>
        <taxon>Methanococcales</taxon>
        <taxon>Methanocaldococcaceae</taxon>
        <taxon>Methanocaldococcus</taxon>
    </lineage>
</organism>
<accession>Q59070</accession>
<protein>
    <recommendedName>
        <fullName>Uncharacterized protein MJ1676</fullName>
    </recommendedName>
</protein>
<dbReference type="EMBL" id="L77117">
    <property type="protein sequence ID" value="AAB99698.1"/>
    <property type="molecule type" value="Genomic_DNA"/>
</dbReference>
<dbReference type="PIR" id="B64509">
    <property type="entry name" value="B64509"/>
</dbReference>
<dbReference type="RefSeq" id="WP_010871200.1">
    <property type="nucleotide sequence ID" value="NC_000909.1"/>
</dbReference>
<dbReference type="SMR" id="Q59070"/>
<dbReference type="FunCoup" id="Q59070">
    <property type="interactions" value="2"/>
</dbReference>
<dbReference type="STRING" id="243232.MJ_1676"/>
<dbReference type="PaxDb" id="243232-MJ_1676"/>
<dbReference type="EnsemblBacteria" id="AAB99698">
    <property type="protein sequence ID" value="AAB99698"/>
    <property type="gene ID" value="MJ_1676"/>
</dbReference>
<dbReference type="GeneID" id="1452585"/>
<dbReference type="KEGG" id="mja:MJ_1676"/>
<dbReference type="eggNOG" id="arCOG04839">
    <property type="taxonomic scope" value="Archaea"/>
</dbReference>
<dbReference type="HOGENOM" id="CLU_1149814_0_0_2"/>
<dbReference type="InParanoid" id="Q59070"/>
<dbReference type="OrthoDB" id="74957at2157"/>
<dbReference type="Proteomes" id="UP000000805">
    <property type="component" value="Chromosome"/>
</dbReference>
<dbReference type="InterPro" id="IPR012021">
    <property type="entry name" value="UCP005278"/>
</dbReference>
<dbReference type="PIRSF" id="PIRSF005278">
    <property type="entry name" value="UCP005278"/>
    <property type="match status" value="1"/>
</dbReference>